<proteinExistence type="inferred from homology"/>
<keyword id="KW-0066">ATP synthesis</keyword>
<keyword id="KW-0997">Cell inner membrane</keyword>
<keyword id="KW-1003">Cell membrane</keyword>
<keyword id="KW-0138">CF(0)</keyword>
<keyword id="KW-0375">Hydrogen ion transport</keyword>
<keyword id="KW-0406">Ion transport</keyword>
<keyword id="KW-0446">Lipid-binding</keyword>
<keyword id="KW-0472">Membrane</keyword>
<keyword id="KW-1185">Reference proteome</keyword>
<keyword id="KW-0812">Transmembrane</keyword>
<keyword id="KW-1133">Transmembrane helix</keyword>
<keyword id="KW-0813">Transport</keyword>
<feature type="chain" id="PRO_1000184485" description="ATP synthase subunit c">
    <location>
        <begin position="1"/>
        <end position="79"/>
    </location>
</feature>
<feature type="transmembrane region" description="Helical" evidence="1">
    <location>
        <begin position="11"/>
        <end position="31"/>
    </location>
</feature>
<feature type="transmembrane region" description="Helical" evidence="1">
    <location>
        <begin position="53"/>
        <end position="73"/>
    </location>
</feature>
<feature type="site" description="Reversibly protonated during proton transport" evidence="1">
    <location>
        <position position="61"/>
    </location>
</feature>
<gene>
    <name evidence="1" type="primary">atpE</name>
    <name type="ordered locus">SbBS512_E4184</name>
</gene>
<accession>B2TUN8</accession>
<organism>
    <name type="scientific">Shigella boydii serotype 18 (strain CDC 3083-94 / BS512)</name>
    <dbReference type="NCBI Taxonomy" id="344609"/>
    <lineage>
        <taxon>Bacteria</taxon>
        <taxon>Pseudomonadati</taxon>
        <taxon>Pseudomonadota</taxon>
        <taxon>Gammaproteobacteria</taxon>
        <taxon>Enterobacterales</taxon>
        <taxon>Enterobacteriaceae</taxon>
        <taxon>Shigella</taxon>
    </lineage>
</organism>
<reference key="1">
    <citation type="submission" date="2008-05" db="EMBL/GenBank/DDBJ databases">
        <title>Complete sequence of Shigella boydii serotype 18 strain BS512.</title>
        <authorList>
            <person name="Rasko D.A."/>
            <person name="Rosovitz M."/>
            <person name="Maurelli A.T."/>
            <person name="Myers G."/>
            <person name="Seshadri R."/>
            <person name="Cer R."/>
            <person name="Jiang L."/>
            <person name="Ravel J."/>
            <person name="Sebastian Y."/>
        </authorList>
    </citation>
    <scope>NUCLEOTIDE SEQUENCE [LARGE SCALE GENOMIC DNA]</scope>
    <source>
        <strain>CDC 3083-94 / BS512</strain>
    </source>
</reference>
<comment type="function">
    <text evidence="1">F(1)F(0) ATP synthase produces ATP from ADP in the presence of a proton or sodium gradient. F-type ATPases consist of two structural domains, F(1) containing the extramembraneous catalytic core and F(0) containing the membrane proton channel, linked together by a central stalk and a peripheral stalk. During catalysis, ATP synthesis in the catalytic domain of F(1) is coupled via a rotary mechanism of the central stalk subunits to proton translocation.</text>
</comment>
<comment type="function">
    <text evidence="1">Key component of the F(0) channel; it plays a direct role in translocation across the membrane. A homomeric c-ring of between 10-14 subunits forms the central stalk rotor element with the F(1) delta and epsilon subunits.</text>
</comment>
<comment type="subunit">
    <text evidence="1">F-type ATPases have 2 components, F(1) - the catalytic core - and F(0) - the membrane proton channel. F(1) has five subunits: alpha(3), beta(3), gamma(1), delta(1), epsilon(1). F(0) has three main subunits: a(1), b(2) and c(10-14). The alpha and beta chains form an alternating ring which encloses part of the gamma chain. F(1) is attached to F(0) by a central stalk formed by the gamma and epsilon chains, while a peripheral stalk is formed by the delta and b chains.</text>
</comment>
<comment type="subcellular location">
    <subcellularLocation>
        <location evidence="1">Cell inner membrane</location>
        <topology evidence="1">Multi-pass membrane protein</topology>
    </subcellularLocation>
</comment>
<comment type="similarity">
    <text evidence="1">Belongs to the ATPase C chain family.</text>
</comment>
<protein>
    <recommendedName>
        <fullName evidence="1">ATP synthase subunit c</fullName>
    </recommendedName>
    <alternativeName>
        <fullName evidence="1">ATP synthase F(0) sector subunit c</fullName>
    </alternativeName>
    <alternativeName>
        <fullName evidence="1">F-type ATPase subunit c</fullName>
        <shortName evidence="1">F-ATPase subunit c</shortName>
    </alternativeName>
    <alternativeName>
        <fullName evidence="1">Lipid-binding protein</fullName>
    </alternativeName>
</protein>
<evidence type="ECO:0000255" key="1">
    <source>
        <dbReference type="HAMAP-Rule" id="MF_01396"/>
    </source>
</evidence>
<name>ATPL_SHIB3</name>
<dbReference type="EMBL" id="CP001063">
    <property type="protein sequence ID" value="ACD10245.1"/>
    <property type="molecule type" value="Genomic_DNA"/>
</dbReference>
<dbReference type="RefSeq" id="WP_000429386.1">
    <property type="nucleotide sequence ID" value="NC_010658.1"/>
</dbReference>
<dbReference type="SMR" id="B2TUN8"/>
<dbReference type="STRING" id="344609.SbBS512_E4184"/>
<dbReference type="GeneID" id="98390858"/>
<dbReference type="KEGG" id="sbc:SbBS512_E4184"/>
<dbReference type="HOGENOM" id="CLU_148047_1_0_6"/>
<dbReference type="Proteomes" id="UP000001030">
    <property type="component" value="Chromosome"/>
</dbReference>
<dbReference type="GO" id="GO:0005886">
    <property type="term" value="C:plasma membrane"/>
    <property type="evidence" value="ECO:0007669"/>
    <property type="project" value="UniProtKB-SubCell"/>
</dbReference>
<dbReference type="GO" id="GO:0045259">
    <property type="term" value="C:proton-transporting ATP synthase complex"/>
    <property type="evidence" value="ECO:0007669"/>
    <property type="project" value="UniProtKB-KW"/>
</dbReference>
<dbReference type="GO" id="GO:0033177">
    <property type="term" value="C:proton-transporting two-sector ATPase complex, proton-transporting domain"/>
    <property type="evidence" value="ECO:0007669"/>
    <property type="project" value="InterPro"/>
</dbReference>
<dbReference type="GO" id="GO:0008289">
    <property type="term" value="F:lipid binding"/>
    <property type="evidence" value="ECO:0007669"/>
    <property type="project" value="UniProtKB-KW"/>
</dbReference>
<dbReference type="GO" id="GO:0046933">
    <property type="term" value="F:proton-transporting ATP synthase activity, rotational mechanism"/>
    <property type="evidence" value="ECO:0007669"/>
    <property type="project" value="UniProtKB-UniRule"/>
</dbReference>
<dbReference type="CDD" id="cd18185">
    <property type="entry name" value="ATP-synt_Fo_c_ATPE"/>
    <property type="match status" value="1"/>
</dbReference>
<dbReference type="FunFam" id="1.20.20.10:FF:000002">
    <property type="entry name" value="ATP synthase subunit c"/>
    <property type="match status" value="1"/>
</dbReference>
<dbReference type="Gene3D" id="1.20.20.10">
    <property type="entry name" value="F1F0 ATP synthase subunit C"/>
    <property type="match status" value="1"/>
</dbReference>
<dbReference type="HAMAP" id="MF_01396">
    <property type="entry name" value="ATP_synth_c_bact"/>
    <property type="match status" value="1"/>
</dbReference>
<dbReference type="InterPro" id="IPR005953">
    <property type="entry name" value="ATP_synth_csu_bac/chlpt"/>
</dbReference>
<dbReference type="InterPro" id="IPR000454">
    <property type="entry name" value="ATP_synth_F0_csu"/>
</dbReference>
<dbReference type="InterPro" id="IPR020537">
    <property type="entry name" value="ATP_synth_F0_csu_DDCD_BS"/>
</dbReference>
<dbReference type="InterPro" id="IPR038662">
    <property type="entry name" value="ATP_synth_F0_csu_sf"/>
</dbReference>
<dbReference type="InterPro" id="IPR002379">
    <property type="entry name" value="ATPase_proteolipid_c-like_dom"/>
</dbReference>
<dbReference type="InterPro" id="IPR035921">
    <property type="entry name" value="F/V-ATP_Csub_sf"/>
</dbReference>
<dbReference type="NCBIfam" id="TIGR01260">
    <property type="entry name" value="ATP_synt_c"/>
    <property type="match status" value="1"/>
</dbReference>
<dbReference type="NCBIfam" id="NF005363">
    <property type="entry name" value="PRK06876.1"/>
    <property type="match status" value="1"/>
</dbReference>
<dbReference type="Pfam" id="PF00137">
    <property type="entry name" value="ATP-synt_C"/>
    <property type="match status" value="1"/>
</dbReference>
<dbReference type="PRINTS" id="PR00124">
    <property type="entry name" value="ATPASEC"/>
</dbReference>
<dbReference type="SUPFAM" id="SSF81333">
    <property type="entry name" value="F1F0 ATP synthase subunit C"/>
    <property type="match status" value="1"/>
</dbReference>
<dbReference type="PROSITE" id="PS00605">
    <property type="entry name" value="ATPASE_C"/>
    <property type="match status" value="1"/>
</dbReference>
<sequence>MENLNMDLLYMAAAVMMGLAAIGAAIGIGILGGKFLEGAARQPDLIPLLRTQFFIVMGLVDAIPMIAVGLGLYVMFAVA</sequence>